<accession>O26122</accession>
<reference key="1">
    <citation type="journal article" date="1997" name="J. Bacteriol.">
        <title>Complete genome sequence of Methanobacterium thermoautotrophicum deltaH: functional analysis and comparative genomics.</title>
        <authorList>
            <person name="Smith D.R."/>
            <person name="Doucette-Stamm L.A."/>
            <person name="Deloughery C."/>
            <person name="Lee H.-M."/>
            <person name="Dubois J."/>
            <person name="Aldredge T."/>
            <person name="Bashirzadeh R."/>
            <person name="Blakely D."/>
            <person name="Cook R."/>
            <person name="Gilbert K."/>
            <person name="Harrison D."/>
            <person name="Hoang L."/>
            <person name="Keagle P."/>
            <person name="Lumm W."/>
            <person name="Pothier B."/>
            <person name="Qiu D."/>
            <person name="Spadafora R."/>
            <person name="Vicare R."/>
            <person name="Wang Y."/>
            <person name="Wierzbowski J."/>
            <person name="Gibson R."/>
            <person name="Jiwani N."/>
            <person name="Caruso A."/>
            <person name="Bush D."/>
            <person name="Safer H."/>
            <person name="Patwell D."/>
            <person name="Prabhakar S."/>
            <person name="McDougall S."/>
            <person name="Shimer G."/>
            <person name="Goyal A."/>
            <person name="Pietrovski S."/>
            <person name="Church G.M."/>
            <person name="Daniels C.J."/>
            <person name="Mao J.-I."/>
            <person name="Rice P."/>
            <person name="Noelling J."/>
            <person name="Reeve J.N."/>
        </authorList>
    </citation>
    <scope>NUCLEOTIDE SEQUENCE [LARGE SCALE GENOMIC DNA]</scope>
    <source>
        <strain>ATCC 29096 / DSM 1053 / JCM 10044 / NBRC 100330 / Delta H</strain>
    </source>
</reference>
<protein>
    <recommendedName>
        <fullName evidence="1">Large ribosomal subunit protein uL24</fullName>
    </recommendedName>
    <alternativeName>
        <fullName evidence="2">50S ribosomal protein L24</fullName>
    </alternativeName>
</protein>
<sequence length="117" mass="13880">MSKQPRKQRKYIYEAPLHARRKMMSANLSRELREEYGRRSLPLRKGDKVEILRGDFRGHEGKVEKVDLKRYRVYVEGATIQKVDGTTVYFPLHPSNLRIVDLNLDDEKRIKILERKG</sequence>
<comment type="function">
    <text evidence="1">One of two assembly initiator proteins, it binds directly to the 5'-end of the 23S rRNA, where it nucleates assembly of the 50S subunit.</text>
</comment>
<comment type="function">
    <text evidence="1">Located at the polypeptide exit tunnel on the outside of the subunit.</text>
</comment>
<comment type="subunit">
    <text evidence="1">Part of the 50S ribosomal subunit.</text>
</comment>
<comment type="similarity">
    <text evidence="1">Belongs to the universal ribosomal protein uL24 family.</text>
</comment>
<evidence type="ECO:0000255" key="1">
    <source>
        <dbReference type="HAMAP-Rule" id="MF_01326"/>
    </source>
</evidence>
<evidence type="ECO:0000305" key="2"/>
<keyword id="KW-1185">Reference proteome</keyword>
<keyword id="KW-0687">Ribonucleoprotein</keyword>
<keyword id="KW-0689">Ribosomal protein</keyword>
<keyword id="KW-0694">RNA-binding</keyword>
<keyword id="KW-0699">rRNA-binding</keyword>
<feature type="chain" id="PRO_0000130774" description="Large ribosomal subunit protein uL24">
    <location>
        <begin position="1"/>
        <end position="117"/>
    </location>
</feature>
<proteinExistence type="inferred from homology"/>
<dbReference type="EMBL" id="AE000666">
    <property type="protein sequence ID" value="AAB84515.1"/>
    <property type="molecule type" value="Genomic_DNA"/>
</dbReference>
<dbReference type="PIR" id="C69053">
    <property type="entry name" value="C69053"/>
</dbReference>
<dbReference type="SMR" id="O26122"/>
<dbReference type="FunCoup" id="O26122">
    <property type="interactions" value="170"/>
</dbReference>
<dbReference type="STRING" id="187420.MTH_14"/>
<dbReference type="PaxDb" id="187420-MTH_14"/>
<dbReference type="EnsemblBacteria" id="AAB84515">
    <property type="protein sequence ID" value="AAB84515"/>
    <property type="gene ID" value="MTH_14"/>
</dbReference>
<dbReference type="KEGG" id="mth:MTH_14"/>
<dbReference type="PATRIC" id="fig|187420.15.peg.14"/>
<dbReference type="HOGENOM" id="CLU_093240_2_1_2"/>
<dbReference type="InParanoid" id="O26122"/>
<dbReference type="Proteomes" id="UP000005223">
    <property type="component" value="Chromosome"/>
</dbReference>
<dbReference type="GO" id="GO:0015934">
    <property type="term" value="C:large ribosomal subunit"/>
    <property type="evidence" value="ECO:0007669"/>
    <property type="project" value="InterPro"/>
</dbReference>
<dbReference type="GO" id="GO:0019843">
    <property type="term" value="F:rRNA binding"/>
    <property type="evidence" value="ECO:0007669"/>
    <property type="project" value="UniProtKB-UniRule"/>
</dbReference>
<dbReference type="GO" id="GO:0003735">
    <property type="term" value="F:structural constituent of ribosome"/>
    <property type="evidence" value="ECO:0007669"/>
    <property type="project" value="InterPro"/>
</dbReference>
<dbReference type="GO" id="GO:0006412">
    <property type="term" value="P:translation"/>
    <property type="evidence" value="ECO:0007669"/>
    <property type="project" value="UniProtKB-UniRule"/>
</dbReference>
<dbReference type="CDD" id="cd06089">
    <property type="entry name" value="KOW_RPL26"/>
    <property type="match status" value="1"/>
</dbReference>
<dbReference type="FunFam" id="2.30.30.30:FF:000009">
    <property type="entry name" value="60S ribosomal protein L26"/>
    <property type="match status" value="1"/>
</dbReference>
<dbReference type="Gene3D" id="2.30.30.30">
    <property type="match status" value="1"/>
</dbReference>
<dbReference type="HAMAP" id="MF_01326_A">
    <property type="entry name" value="Ribosomal_uL24_A"/>
    <property type="match status" value="1"/>
</dbReference>
<dbReference type="InterPro" id="IPR005824">
    <property type="entry name" value="KOW"/>
</dbReference>
<dbReference type="InterPro" id="IPR014722">
    <property type="entry name" value="Rib_uL2_dom2"/>
</dbReference>
<dbReference type="InterPro" id="IPR005825">
    <property type="entry name" value="Ribosomal_uL24_CS"/>
</dbReference>
<dbReference type="InterPro" id="IPR005756">
    <property type="entry name" value="Ribosomal_uL24_euk/arc"/>
</dbReference>
<dbReference type="InterPro" id="IPR041988">
    <property type="entry name" value="Ribosomal_uL24_KOW"/>
</dbReference>
<dbReference type="InterPro" id="IPR008991">
    <property type="entry name" value="Translation_prot_SH3-like_sf"/>
</dbReference>
<dbReference type="NCBIfam" id="TIGR01080">
    <property type="entry name" value="rplX_A_E"/>
    <property type="match status" value="1"/>
</dbReference>
<dbReference type="PANTHER" id="PTHR11143">
    <property type="entry name" value="60S RIBOSOMAL PROTEIN L26 FAMILY MEMBER"/>
    <property type="match status" value="1"/>
</dbReference>
<dbReference type="Pfam" id="PF00467">
    <property type="entry name" value="KOW"/>
    <property type="match status" value="1"/>
</dbReference>
<dbReference type="Pfam" id="PF16906">
    <property type="entry name" value="Ribosomal_L26"/>
    <property type="match status" value="1"/>
</dbReference>
<dbReference type="SMART" id="SM00739">
    <property type="entry name" value="KOW"/>
    <property type="match status" value="1"/>
</dbReference>
<dbReference type="SUPFAM" id="SSF50104">
    <property type="entry name" value="Translation proteins SH3-like domain"/>
    <property type="match status" value="1"/>
</dbReference>
<dbReference type="PROSITE" id="PS01108">
    <property type="entry name" value="RIBOSOMAL_L24"/>
    <property type="match status" value="1"/>
</dbReference>
<organism>
    <name type="scientific">Methanothermobacter thermautotrophicus (strain ATCC 29096 / DSM 1053 / JCM 10044 / NBRC 100330 / Delta H)</name>
    <name type="common">Methanobacterium thermoautotrophicum</name>
    <dbReference type="NCBI Taxonomy" id="187420"/>
    <lineage>
        <taxon>Archaea</taxon>
        <taxon>Methanobacteriati</taxon>
        <taxon>Methanobacteriota</taxon>
        <taxon>Methanomada group</taxon>
        <taxon>Methanobacteria</taxon>
        <taxon>Methanobacteriales</taxon>
        <taxon>Methanobacteriaceae</taxon>
        <taxon>Methanothermobacter</taxon>
    </lineage>
</organism>
<name>RL24_METTH</name>
<gene>
    <name evidence="1" type="primary">rpl24</name>
    <name type="ordered locus">MTH_14</name>
</gene>